<comment type="function">
    <text evidence="1">An essential GTPase which binds GTP, GDP and possibly (p)ppGpp with moderate affinity, with high nucleotide exchange rates and a fairly low GTP hydrolysis rate. Plays a role in control of the cell cycle, stress response, ribosome biogenesis and in those bacteria that undergo differentiation, in morphogenesis control.</text>
</comment>
<comment type="cofactor">
    <cofactor evidence="1">
        <name>Mg(2+)</name>
        <dbReference type="ChEBI" id="CHEBI:18420"/>
    </cofactor>
</comment>
<comment type="subunit">
    <text evidence="1">Monomer.</text>
</comment>
<comment type="subcellular location">
    <subcellularLocation>
        <location evidence="1">Cytoplasm</location>
    </subcellularLocation>
</comment>
<comment type="similarity">
    <text evidence="1">Belongs to the TRAFAC class OBG-HflX-like GTPase superfamily. OBG GTPase family.</text>
</comment>
<accession>Q3BW46</accession>
<protein>
    <recommendedName>
        <fullName evidence="1">GTPase Obg</fullName>
        <ecNumber evidence="1">3.6.5.-</ecNumber>
    </recommendedName>
    <alternativeName>
        <fullName evidence="1">GTP-binding protein Obg</fullName>
    </alternativeName>
</protein>
<dbReference type="EC" id="3.6.5.-" evidence="1"/>
<dbReference type="EMBL" id="AM039952">
    <property type="protein sequence ID" value="CAJ22917.1"/>
    <property type="molecule type" value="Genomic_DNA"/>
</dbReference>
<dbReference type="SMR" id="Q3BW46"/>
<dbReference type="STRING" id="456327.BJD11_16185"/>
<dbReference type="KEGG" id="xcv:XCV1286"/>
<dbReference type="eggNOG" id="COG0536">
    <property type="taxonomic scope" value="Bacteria"/>
</dbReference>
<dbReference type="HOGENOM" id="CLU_011747_2_0_6"/>
<dbReference type="Proteomes" id="UP000007069">
    <property type="component" value="Chromosome"/>
</dbReference>
<dbReference type="GO" id="GO:0005737">
    <property type="term" value="C:cytoplasm"/>
    <property type="evidence" value="ECO:0007669"/>
    <property type="project" value="UniProtKB-SubCell"/>
</dbReference>
<dbReference type="GO" id="GO:0005525">
    <property type="term" value="F:GTP binding"/>
    <property type="evidence" value="ECO:0007669"/>
    <property type="project" value="UniProtKB-UniRule"/>
</dbReference>
<dbReference type="GO" id="GO:0003924">
    <property type="term" value="F:GTPase activity"/>
    <property type="evidence" value="ECO:0007669"/>
    <property type="project" value="UniProtKB-UniRule"/>
</dbReference>
<dbReference type="GO" id="GO:0000287">
    <property type="term" value="F:magnesium ion binding"/>
    <property type="evidence" value="ECO:0007669"/>
    <property type="project" value="InterPro"/>
</dbReference>
<dbReference type="GO" id="GO:0042254">
    <property type="term" value="P:ribosome biogenesis"/>
    <property type="evidence" value="ECO:0007669"/>
    <property type="project" value="UniProtKB-UniRule"/>
</dbReference>
<dbReference type="CDD" id="cd01898">
    <property type="entry name" value="Obg"/>
    <property type="match status" value="1"/>
</dbReference>
<dbReference type="FunFam" id="2.70.210.12:FF:000001">
    <property type="entry name" value="GTPase Obg"/>
    <property type="match status" value="1"/>
</dbReference>
<dbReference type="Gene3D" id="2.70.210.12">
    <property type="entry name" value="GTP1/OBG domain"/>
    <property type="match status" value="1"/>
</dbReference>
<dbReference type="Gene3D" id="3.40.50.300">
    <property type="entry name" value="P-loop containing nucleotide triphosphate hydrolases"/>
    <property type="match status" value="1"/>
</dbReference>
<dbReference type="HAMAP" id="MF_01454">
    <property type="entry name" value="GTPase_Obg"/>
    <property type="match status" value="1"/>
</dbReference>
<dbReference type="InterPro" id="IPR031167">
    <property type="entry name" value="G_OBG"/>
</dbReference>
<dbReference type="InterPro" id="IPR006073">
    <property type="entry name" value="GTP-bd"/>
</dbReference>
<dbReference type="InterPro" id="IPR014100">
    <property type="entry name" value="GTP-bd_Obg/CgtA"/>
</dbReference>
<dbReference type="InterPro" id="IPR006074">
    <property type="entry name" value="GTP1-OBG_CS"/>
</dbReference>
<dbReference type="InterPro" id="IPR006169">
    <property type="entry name" value="GTP1_OBG_dom"/>
</dbReference>
<dbReference type="InterPro" id="IPR036726">
    <property type="entry name" value="GTP1_OBG_dom_sf"/>
</dbReference>
<dbReference type="InterPro" id="IPR045086">
    <property type="entry name" value="OBG_GTPase"/>
</dbReference>
<dbReference type="InterPro" id="IPR027417">
    <property type="entry name" value="P-loop_NTPase"/>
</dbReference>
<dbReference type="NCBIfam" id="TIGR02729">
    <property type="entry name" value="Obg_CgtA"/>
    <property type="match status" value="1"/>
</dbReference>
<dbReference type="NCBIfam" id="NF008955">
    <property type="entry name" value="PRK12297.1"/>
    <property type="match status" value="1"/>
</dbReference>
<dbReference type="NCBIfam" id="NF008956">
    <property type="entry name" value="PRK12299.1"/>
    <property type="match status" value="1"/>
</dbReference>
<dbReference type="PANTHER" id="PTHR11702">
    <property type="entry name" value="DEVELOPMENTALLY REGULATED GTP-BINDING PROTEIN-RELATED"/>
    <property type="match status" value="1"/>
</dbReference>
<dbReference type="PANTHER" id="PTHR11702:SF31">
    <property type="entry name" value="MITOCHONDRIAL RIBOSOME-ASSOCIATED GTPASE 2"/>
    <property type="match status" value="1"/>
</dbReference>
<dbReference type="Pfam" id="PF01018">
    <property type="entry name" value="GTP1_OBG"/>
    <property type="match status" value="1"/>
</dbReference>
<dbReference type="Pfam" id="PF01926">
    <property type="entry name" value="MMR_HSR1"/>
    <property type="match status" value="1"/>
</dbReference>
<dbReference type="PIRSF" id="PIRSF002401">
    <property type="entry name" value="GTP_bd_Obg/CgtA"/>
    <property type="match status" value="1"/>
</dbReference>
<dbReference type="PRINTS" id="PR00326">
    <property type="entry name" value="GTP1OBG"/>
</dbReference>
<dbReference type="SUPFAM" id="SSF82051">
    <property type="entry name" value="Obg GTP-binding protein N-terminal domain"/>
    <property type="match status" value="1"/>
</dbReference>
<dbReference type="SUPFAM" id="SSF52540">
    <property type="entry name" value="P-loop containing nucleoside triphosphate hydrolases"/>
    <property type="match status" value="1"/>
</dbReference>
<dbReference type="PROSITE" id="PS51710">
    <property type="entry name" value="G_OBG"/>
    <property type="match status" value="1"/>
</dbReference>
<dbReference type="PROSITE" id="PS00905">
    <property type="entry name" value="GTP1_OBG"/>
    <property type="match status" value="1"/>
</dbReference>
<dbReference type="PROSITE" id="PS51883">
    <property type="entry name" value="OBG"/>
    <property type="match status" value="1"/>
</dbReference>
<keyword id="KW-0963">Cytoplasm</keyword>
<keyword id="KW-0342">GTP-binding</keyword>
<keyword id="KW-0378">Hydrolase</keyword>
<keyword id="KW-0460">Magnesium</keyword>
<keyword id="KW-0479">Metal-binding</keyword>
<keyword id="KW-0547">Nucleotide-binding</keyword>
<evidence type="ECO:0000255" key="1">
    <source>
        <dbReference type="HAMAP-Rule" id="MF_01454"/>
    </source>
</evidence>
<evidence type="ECO:0000255" key="2">
    <source>
        <dbReference type="PROSITE-ProRule" id="PRU01231"/>
    </source>
</evidence>
<reference key="1">
    <citation type="journal article" date="2005" name="J. Bacteriol.">
        <title>Insights into genome plasticity and pathogenicity of the plant pathogenic Bacterium Xanthomonas campestris pv. vesicatoria revealed by the complete genome sequence.</title>
        <authorList>
            <person name="Thieme F."/>
            <person name="Koebnik R."/>
            <person name="Bekel T."/>
            <person name="Berger C."/>
            <person name="Boch J."/>
            <person name="Buettner D."/>
            <person name="Caldana C."/>
            <person name="Gaigalat L."/>
            <person name="Goesmann A."/>
            <person name="Kay S."/>
            <person name="Kirchner O."/>
            <person name="Lanz C."/>
            <person name="Linke B."/>
            <person name="McHardy A.C."/>
            <person name="Meyer F."/>
            <person name="Mittenhuber G."/>
            <person name="Nies D.H."/>
            <person name="Niesbach-Kloesgen U."/>
            <person name="Patschkowski T."/>
            <person name="Rueckert C."/>
            <person name="Rupp O."/>
            <person name="Schneiker S."/>
            <person name="Schuster S.C."/>
            <person name="Vorhoelter F.J."/>
            <person name="Weber E."/>
            <person name="Puehler A."/>
            <person name="Bonas U."/>
            <person name="Bartels D."/>
            <person name="Kaiser O."/>
        </authorList>
    </citation>
    <scope>NUCLEOTIDE SEQUENCE [LARGE SCALE GENOMIC DNA]</scope>
    <source>
        <strain>85-10</strain>
    </source>
</reference>
<organism>
    <name type="scientific">Xanthomonas euvesicatoria pv. vesicatoria (strain 85-10)</name>
    <name type="common">Xanthomonas campestris pv. vesicatoria</name>
    <dbReference type="NCBI Taxonomy" id="316273"/>
    <lineage>
        <taxon>Bacteria</taxon>
        <taxon>Pseudomonadati</taxon>
        <taxon>Pseudomonadota</taxon>
        <taxon>Gammaproteobacteria</taxon>
        <taxon>Lysobacterales</taxon>
        <taxon>Lysobacteraceae</taxon>
        <taxon>Xanthomonas</taxon>
    </lineage>
</organism>
<gene>
    <name evidence="1" type="primary">obg</name>
    <name type="ordered locus">XCV1286</name>
</gene>
<sequence>MKLVDEAEILVTAGNGGNGCVGFRREKFIPLGGPDGGDGGAGGSVWIVADENVNTLVDFRHERTFKAQRGENGMGRQAYGKGGEDRIIVVPVGTVVINVQTDEVIGDLTRHGDRLLVAKGGKGGLGNMHFKSSVNRAPRQATTGEEGEERLLKLELKLLADVGLLGFPNAGKSTLIRAVSSATPKVADYPFTTLYPNLGVVSVEAYRSFVIADVPGLIEGAADGAGLGTQFLRHLQRTRLLLHLVDISPALGVYGEGGVDGVSPADQVRTIERELERHDPELLKKPRWLVLNKADLMFEDEARAAAESIVAELGWTAPWYLVSALGRDGTFPIMKDVMAFFDRQREDELDARNAG</sequence>
<name>OBG_XANE5</name>
<proteinExistence type="inferred from homology"/>
<feature type="chain" id="PRO_0000386397" description="GTPase Obg">
    <location>
        <begin position="1"/>
        <end position="355"/>
    </location>
</feature>
<feature type="domain" description="Obg" evidence="2">
    <location>
        <begin position="1"/>
        <end position="159"/>
    </location>
</feature>
<feature type="domain" description="OBG-type G" evidence="1">
    <location>
        <begin position="160"/>
        <end position="342"/>
    </location>
</feature>
<feature type="binding site" evidence="1">
    <location>
        <begin position="166"/>
        <end position="173"/>
    </location>
    <ligand>
        <name>GTP</name>
        <dbReference type="ChEBI" id="CHEBI:37565"/>
    </ligand>
</feature>
<feature type="binding site" evidence="1">
    <location>
        <position position="173"/>
    </location>
    <ligand>
        <name>Mg(2+)</name>
        <dbReference type="ChEBI" id="CHEBI:18420"/>
    </ligand>
</feature>
<feature type="binding site" evidence="1">
    <location>
        <begin position="191"/>
        <end position="195"/>
    </location>
    <ligand>
        <name>GTP</name>
        <dbReference type="ChEBI" id="CHEBI:37565"/>
    </ligand>
</feature>
<feature type="binding site" evidence="1">
    <location>
        <position position="193"/>
    </location>
    <ligand>
        <name>Mg(2+)</name>
        <dbReference type="ChEBI" id="CHEBI:18420"/>
    </ligand>
</feature>
<feature type="binding site" evidence="1">
    <location>
        <begin position="213"/>
        <end position="216"/>
    </location>
    <ligand>
        <name>GTP</name>
        <dbReference type="ChEBI" id="CHEBI:37565"/>
    </ligand>
</feature>
<feature type="binding site" evidence="1">
    <location>
        <begin position="292"/>
        <end position="295"/>
    </location>
    <ligand>
        <name>GTP</name>
        <dbReference type="ChEBI" id="CHEBI:37565"/>
    </ligand>
</feature>
<feature type="binding site" evidence="1">
    <location>
        <begin position="323"/>
        <end position="325"/>
    </location>
    <ligand>
        <name>GTP</name>
        <dbReference type="ChEBI" id="CHEBI:37565"/>
    </ligand>
</feature>